<dbReference type="EMBL" id="BX569689">
    <property type="protein sequence ID" value="CAE06548.1"/>
    <property type="molecule type" value="Genomic_DNA"/>
</dbReference>
<dbReference type="RefSeq" id="WP_011126911.1">
    <property type="nucleotide sequence ID" value="NC_005070.1"/>
</dbReference>
<dbReference type="SMR" id="Q7UA67"/>
<dbReference type="STRING" id="84588.SYNW0033"/>
<dbReference type="KEGG" id="syw:SYNW0033"/>
<dbReference type="eggNOG" id="COG0231">
    <property type="taxonomic scope" value="Bacteria"/>
</dbReference>
<dbReference type="HOGENOM" id="CLU_074944_0_1_3"/>
<dbReference type="UniPathway" id="UPA00345"/>
<dbReference type="Proteomes" id="UP000001422">
    <property type="component" value="Chromosome"/>
</dbReference>
<dbReference type="GO" id="GO:0005737">
    <property type="term" value="C:cytoplasm"/>
    <property type="evidence" value="ECO:0007669"/>
    <property type="project" value="UniProtKB-SubCell"/>
</dbReference>
<dbReference type="GO" id="GO:0003746">
    <property type="term" value="F:translation elongation factor activity"/>
    <property type="evidence" value="ECO:0007669"/>
    <property type="project" value="UniProtKB-UniRule"/>
</dbReference>
<dbReference type="GO" id="GO:0043043">
    <property type="term" value="P:peptide biosynthetic process"/>
    <property type="evidence" value="ECO:0007669"/>
    <property type="project" value="InterPro"/>
</dbReference>
<dbReference type="CDD" id="cd04470">
    <property type="entry name" value="S1_EF-P_repeat_1"/>
    <property type="match status" value="1"/>
</dbReference>
<dbReference type="CDD" id="cd05794">
    <property type="entry name" value="S1_EF-P_repeat_2"/>
    <property type="match status" value="1"/>
</dbReference>
<dbReference type="FunFam" id="2.30.30.30:FF:000003">
    <property type="entry name" value="Elongation factor P"/>
    <property type="match status" value="1"/>
</dbReference>
<dbReference type="FunFam" id="2.40.50.140:FF:000004">
    <property type="entry name" value="Elongation factor P"/>
    <property type="match status" value="1"/>
</dbReference>
<dbReference type="FunFam" id="2.40.50.140:FF:000009">
    <property type="entry name" value="Elongation factor P"/>
    <property type="match status" value="1"/>
</dbReference>
<dbReference type="Gene3D" id="2.30.30.30">
    <property type="match status" value="1"/>
</dbReference>
<dbReference type="Gene3D" id="2.40.50.140">
    <property type="entry name" value="Nucleic acid-binding proteins"/>
    <property type="match status" value="2"/>
</dbReference>
<dbReference type="HAMAP" id="MF_00141">
    <property type="entry name" value="EF_P"/>
    <property type="match status" value="1"/>
</dbReference>
<dbReference type="InterPro" id="IPR015365">
    <property type="entry name" value="Elong-fact-P_C"/>
</dbReference>
<dbReference type="InterPro" id="IPR012340">
    <property type="entry name" value="NA-bd_OB-fold"/>
</dbReference>
<dbReference type="InterPro" id="IPR014722">
    <property type="entry name" value="Rib_uL2_dom2"/>
</dbReference>
<dbReference type="InterPro" id="IPR020599">
    <property type="entry name" value="Transl_elong_fac_P/YeiP"/>
</dbReference>
<dbReference type="InterPro" id="IPR013185">
    <property type="entry name" value="Transl_elong_KOW-like"/>
</dbReference>
<dbReference type="InterPro" id="IPR001059">
    <property type="entry name" value="Transl_elong_P/YeiP_cen"/>
</dbReference>
<dbReference type="InterPro" id="IPR013852">
    <property type="entry name" value="Transl_elong_P/YeiP_CS"/>
</dbReference>
<dbReference type="InterPro" id="IPR011768">
    <property type="entry name" value="Transl_elongation_fac_P"/>
</dbReference>
<dbReference type="InterPro" id="IPR008991">
    <property type="entry name" value="Translation_prot_SH3-like_sf"/>
</dbReference>
<dbReference type="NCBIfam" id="TIGR00038">
    <property type="entry name" value="efp"/>
    <property type="match status" value="1"/>
</dbReference>
<dbReference type="NCBIfam" id="NF001810">
    <property type="entry name" value="PRK00529.1"/>
    <property type="match status" value="1"/>
</dbReference>
<dbReference type="PANTHER" id="PTHR30053">
    <property type="entry name" value="ELONGATION FACTOR P"/>
    <property type="match status" value="1"/>
</dbReference>
<dbReference type="PANTHER" id="PTHR30053:SF12">
    <property type="entry name" value="ELONGATION FACTOR P (EF-P) FAMILY PROTEIN"/>
    <property type="match status" value="1"/>
</dbReference>
<dbReference type="Pfam" id="PF01132">
    <property type="entry name" value="EFP"/>
    <property type="match status" value="1"/>
</dbReference>
<dbReference type="Pfam" id="PF08207">
    <property type="entry name" value="EFP_N"/>
    <property type="match status" value="1"/>
</dbReference>
<dbReference type="Pfam" id="PF09285">
    <property type="entry name" value="Elong-fact-P_C"/>
    <property type="match status" value="1"/>
</dbReference>
<dbReference type="PIRSF" id="PIRSF005901">
    <property type="entry name" value="EF-P"/>
    <property type="match status" value="1"/>
</dbReference>
<dbReference type="SMART" id="SM01185">
    <property type="entry name" value="EFP"/>
    <property type="match status" value="1"/>
</dbReference>
<dbReference type="SMART" id="SM00841">
    <property type="entry name" value="Elong-fact-P_C"/>
    <property type="match status" value="1"/>
</dbReference>
<dbReference type="SUPFAM" id="SSF50249">
    <property type="entry name" value="Nucleic acid-binding proteins"/>
    <property type="match status" value="2"/>
</dbReference>
<dbReference type="SUPFAM" id="SSF50104">
    <property type="entry name" value="Translation proteins SH3-like domain"/>
    <property type="match status" value="1"/>
</dbReference>
<dbReference type="PROSITE" id="PS01275">
    <property type="entry name" value="EFP"/>
    <property type="match status" value="1"/>
</dbReference>
<sequence length="187" mass="20523">MISSNDFRTGTTIEIDGAVWRVVEFLHVKPGKGSAFVRSKLKAVKTGNVVEKTFRAGEMLPQALLEKASLQHTYMEGEDYVFMDMSTYEETRLSADQIGESRKYLKEGMEVNVVSWNGSPLEVELPNSVVLEITETDPGVKGDTATGGTKPAILETGAQVMVPLFLSIGEKIKVDTRSDSYLGRENG</sequence>
<gene>
    <name evidence="1" type="primary">efp</name>
    <name type="ordered locus">SYNW0033</name>
</gene>
<evidence type="ECO:0000255" key="1">
    <source>
        <dbReference type="HAMAP-Rule" id="MF_00141"/>
    </source>
</evidence>
<reference key="1">
    <citation type="journal article" date="2003" name="Nature">
        <title>The genome of a motile marine Synechococcus.</title>
        <authorList>
            <person name="Palenik B."/>
            <person name="Brahamsha B."/>
            <person name="Larimer F.W."/>
            <person name="Land M.L."/>
            <person name="Hauser L."/>
            <person name="Chain P."/>
            <person name="Lamerdin J.E."/>
            <person name="Regala W."/>
            <person name="Allen E.E."/>
            <person name="McCarren J."/>
            <person name="Paulsen I.T."/>
            <person name="Dufresne A."/>
            <person name="Partensky F."/>
            <person name="Webb E.A."/>
            <person name="Waterbury J."/>
        </authorList>
    </citation>
    <scope>NUCLEOTIDE SEQUENCE [LARGE SCALE GENOMIC DNA]</scope>
    <source>
        <strain>WH8102</strain>
    </source>
</reference>
<organism>
    <name type="scientific">Parasynechococcus marenigrum (strain WH8102)</name>
    <dbReference type="NCBI Taxonomy" id="84588"/>
    <lineage>
        <taxon>Bacteria</taxon>
        <taxon>Bacillati</taxon>
        <taxon>Cyanobacteriota</taxon>
        <taxon>Cyanophyceae</taxon>
        <taxon>Synechococcales</taxon>
        <taxon>Prochlorococcaceae</taxon>
        <taxon>Parasynechococcus</taxon>
        <taxon>Parasynechococcus marenigrum</taxon>
    </lineage>
</organism>
<protein>
    <recommendedName>
        <fullName evidence="1">Elongation factor P</fullName>
        <shortName evidence="1">EF-P</shortName>
    </recommendedName>
</protein>
<proteinExistence type="inferred from homology"/>
<keyword id="KW-0963">Cytoplasm</keyword>
<keyword id="KW-0251">Elongation factor</keyword>
<keyword id="KW-0648">Protein biosynthesis</keyword>
<comment type="function">
    <text evidence="1">Involved in peptide bond synthesis. Stimulates efficient translation and peptide-bond synthesis on native or reconstituted 70S ribosomes in vitro. Probably functions indirectly by altering the affinity of the ribosome for aminoacyl-tRNA, thus increasing their reactivity as acceptors for peptidyl transferase.</text>
</comment>
<comment type="pathway">
    <text evidence="1">Protein biosynthesis; polypeptide chain elongation.</text>
</comment>
<comment type="subcellular location">
    <subcellularLocation>
        <location evidence="1">Cytoplasm</location>
    </subcellularLocation>
</comment>
<comment type="similarity">
    <text evidence="1">Belongs to the elongation factor P family.</text>
</comment>
<accession>Q7UA67</accession>
<name>EFP_PARMW</name>
<feature type="chain" id="PRO_0000094353" description="Elongation factor P">
    <location>
        <begin position="1"/>
        <end position="187"/>
    </location>
</feature>